<evidence type="ECO:0000250" key="1">
    <source>
        <dbReference type="UniProtKB" id="O43314"/>
    </source>
</evidence>
<evidence type="ECO:0000250" key="2">
    <source>
        <dbReference type="UniProtKB" id="Q6PFW1"/>
    </source>
</evidence>
<evidence type="ECO:0000256" key="3">
    <source>
        <dbReference type="SAM" id="MobiDB-lite"/>
    </source>
</evidence>
<evidence type="ECO:0000303" key="4">
    <source>
    </source>
</evidence>
<evidence type="ECO:0000303" key="5">
    <source>
    </source>
</evidence>
<evidence type="ECO:0000305" key="6"/>
<evidence type="ECO:0000312" key="7">
    <source>
        <dbReference type="MGI" id="MGI:2443281"/>
    </source>
</evidence>
<evidence type="ECO:0007744" key="8">
    <source>
    </source>
</evidence>
<feature type="chain" id="PRO_0000315689" description="Inositol hexakisphosphate and diphosphoinositol-pentakisphosphate kinase 1">
    <location>
        <begin position="1"/>
        <end position="1436"/>
    </location>
</feature>
<feature type="region of interest" description="Polyphosphoinositide-binding domain" evidence="2">
    <location>
        <begin position="382"/>
        <end position="453"/>
    </location>
</feature>
<feature type="region of interest" description="Disordered" evidence="3">
    <location>
        <begin position="915"/>
        <end position="998"/>
    </location>
</feature>
<feature type="region of interest" description="Disordered" evidence="3">
    <location>
        <begin position="1131"/>
        <end position="1191"/>
    </location>
</feature>
<feature type="region of interest" description="Disordered" evidence="3">
    <location>
        <begin position="1389"/>
        <end position="1436"/>
    </location>
</feature>
<feature type="compositionally biased region" description="Low complexity" evidence="3">
    <location>
        <begin position="1163"/>
        <end position="1181"/>
    </location>
</feature>
<feature type="compositionally biased region" description="Acidic residues" evidence="3">
    <location>
        <begin position="1405"/>
        <end position="1436"/>
    </location>
</feature>
<feature type="binding site" evidence="1">
    <location>
        <begin position="64"/>
        <end position="65"/>
    </location>
    <ligand>
        <name>substrate</name>
    </ligand>
</feature>
<feature type="binding site" evidence="1">
    <location>
        <position position="145"/>
    </location>
    <ligand>
        <name>ATP</name>
        <dbReference type="ChEBI" id="CHEBI:30616"/>
    </ligand>
</feature>
<feature type="binding site" evidence="1">
    <location>
        <position position="198"/>
    </location>
    <ligand>
        <name>ATP</name>
        <dbReference type="ChEBI" id="CHEBI:30616"/>
    </ligand>
</feature>
<feature type="binding site" evidence="1">
    <location>
        <position position="205"/>
    </location>
    <ligand>
        <name>ATP</name>
        <dbReference type="ChEBI" id="CHEBI:30616"/>
    </ligand>
</feature>
<feature type="binding site" evidence="1">
    <location>
        <begin position="224"/>
        <end position="225"/>
    </location>
    <ligand>
        <name>substrate</name>
    </ligand>
</feature>
<feature type="binding site" evidence="1">
    <location>
        <position position="224"/>
    </location>
    <ligand>
        <name>ATP</name>
        <dbReference type="ChEBI" id="CHEBI:30616"/>
    </ligand>
</feature>
<feature type="binding site" evidence="1">
    <location>
        <begin position="248"/>
        <end position="251"/>
    </location>
    <ligand>
        <name>ATP</name>
        <dbReference type="ChEBI" id="CHEBI:30616"/>
    </ligand>
</feature>
<feature type="binding site" evidence="1">
    <location>
        <begin position="257"/>
        <end position="259"/>
    </location>
    <ligand>
        <name>ATP</name>
        <dbReference type="ChEBI" id="CHEBI:30616"/>
    </ligand>
</feature>
<feature type="binding site" evidence="1">
    <location>
        <position position="259"/>
    </location>
    <ligand>
        <name>substrate</name>
    </ligand>
</feature>
<feature type="binding site" evidence="1">
    <location>
        <position position="273"/>
    </location>
    <ligand>
        <name>substrate</name>
    </ligand>
</feature>
<feature type="binding site" evidence="1">
    <location>
        <position position="275"/>
    </location>
    <ligand>
        <name>ATP</name>
        <dbReference type="ChEBI" id="CHEBI:30616"/>
    </ligand>
</feature>
<feature type="binding site" evidence="1">
    <location>
        <position position="320"/>
    </location>
    <ligand>
        <name>ATP</name>
        <dbReference type="ChEBI" id="CHEBI:30616"/>
    </ligand>
</feature>
<feature type="binding site" evidence="1">
    <location>
        <begin position="332"/>
        <end position="334"/>
    </location>
    <ligand>
        <name>ATP</name>
        <dbReference type="ChEBI" id="CHEBI:30616"/>
    </ligand>
</feature>
<feature type="binding site" evidence="1">
    <location>
        <begin position="337"/>
        <end position="340"/>
    </location>
    <ligand>
        <name>substrate</name>
    </ligand>
</feature>
<feature type="modified residue" description="Phosphoserine" evidence="2">
    <location>
        <position position="939"/>
    </location>
</feature>
<feature type="modified residue" description="Phosphoserine" evidence="2">
    <location>
        <position position="982"/>
    </location>
</feature>
<feature type="modified residue" description="Phosphoserine" evidence="2">
    <location>
        <position position="1032"/>
    </location>
</feature>
<feature type="modified residue" description="Phosphoserine" evidence="2">
    <location>
        <position position="1068"/>
    </location>
</feature>
<feature type="modified residue" description="Phosphoserine" evidence="8">
    <location>
        <position position="1140"/>
    </location>
</feature>
<feature type="modified residue" description="Phosphoserine" evidence="8">
    <location>
        <position position="1147"/>
    </location>
</feature>
<feature type="splice variant" id="VSP_030625" description="In isoform 4." evidence="5">
    <original>YTVGPD</original>
    <variation>MVDAEI</variation>
    <location>
        <begin position="261"/>
        <end position="266"/>
    </location>
</feature>
<feature type="splice variant" id="VSP_030626" description="In isoform 4." evidence="5">
    <location>
        <begin position="267"/>
        <end position="1436"/>
    </location>
</feature>
<feature type="splice variant" id="VSP_030627" description="In isoform 5." evidence="4">
    <original>RTPKQKMKMEVTHPRFFALFEKHGGYKTGKLKLKRPE</original>
    <variation>HPSFVIEKLVPWRCCLKLHLQDLVATVCFHLHGHQQR</variation>
    <location>
        <begin position="403"/>
        <end position="439"/>
    </location>
</feature>
<feature type="splice variant" id="VSP_030628" description="In isoform 5." evidence="4">
    <location>
        <begin position="440"/>
        <end position="1436"/>
    </location>
</feature>
<feature type="splice variant" id="VSP_030629" description="In isoform 6." evidence="5">
    <original>LAPTGSTSLLNSMSVIQNP</original>
    <variation>VTLFSSPCSNYIATQFLKF</variation>
    <location>
        <begin position="653"/>
        <end position="671"/>
    </location>
</feature>
<feature type="splice variant" id="VSP_030630" description="In isoform 6." evidence="5">
    <location>
        <begin position="672"/>
        <end position="1436"/>
    </location>
</feature>
<feature type="splice variant" id="VSP_030631" description="In isoform 2." evidence="6">
    <location>
        <begin position="818"/>
        <end position="837"/>
    </location>
</feature>
<feature type="splice variant" id="VSP_030634" description="In isoform 3." evidence="6">
    <location>
        <begin position="1057"/>
        <end position="1077"/>
    </location>
</feature>
<feature type="sequence conflict" description="In Ref. 3; BAC38780." evidence="6" ref="3">
    <original>L</original>
    <variation>I</variation>
    <location>
        <position position="441"/>
    </location>
</feature>
<feature type="sequence conflict" description="In Ref. 3; BAC32838." evidence="6" ref="3">
    <original>T</original>
    <variation>A</variation>
    <location>
        <position position="831"/>
    </location>
</feature>
<feature type="sequence conflict" description="In Ref. 2; BAC65546." evidence="6" ref="2">
    <original>P</original>
    <variation>S</variation>
    <location>
        <position position="1049"/>
    </location>
</feature>
<feature type="sequence conflict" description="In Ref. 1; AAP46293 and 2; BAC65546." evidence="6" ref="1 2">
    <original>T</original>
    <variation>A</variation>
    <location>
        <position position="1180"/>
    </location>
</feature>
<comment type="function">
    <text evidence="2">Bifunctional inositol kinase that acts in concert with the IP6K kinases IP6K1, IP6K2 and IP6K3 to synthesize the diphosphate group-containing inositol pyrophosphates diphosphoinositol pentakisphosphate, PP-InsP5, and bis-diphosphoinositol tetrakisphosphate, (PP)2-InsP4. PP-InsP5 and (PP)2-InsP4, also respectively called InsP7 and InsP8, regulate a variety of cellular processes, including apoptosis, vesicle trafficking, cytoskeletal dynamics, exocytosis, insulin signaling and neutrophil activation. Phosphorylates inositol hexakisphosphate (InsP6) at position 1 to produce PP-InsP5 which is in turn phosphorylated by IP6Ks to produce (PP)2-InsP4. Alternatively, phosphorylates PP-InsP5 at position 1, produced by IP6Ks from InsP6, to produce (PP)2-InsP4. Activated when cells are exposed to hyperosmotic stress.</text>
</comment>
<comment type="catalytic activity">
    <reaction evidence="2">
        <text>1D-myo-inositol hexakisphosphate + ATP = 1-diphospho-1D-myo-inositol 2,3,4,5,6-pentakisphosphate + ADP</text>
        <dbReference type="Rhea" id="RHEA:37459"/>
        <dbReference type="ChEBI" id="CHEBI:30616"/>
        <dbReference type="ChEBI" id="CHEBI:58130"/>
        <dbReference type="ChEBI" id="CHEBI:74946"/>
        <dbReference type="ChEBI" id="CHEBI:456216"/>
        <dbReference type="EC" id="2.7.4.24"/>
    </reaction>
    <physiologicalReaction direction="left-to-right" evidence="2">
        <dbReference type="Rhea" id="RHEA:37460"/>
    </physiologicalReaction>
</comment>
<comment type="catalytic activity">
    <reaction evidence="2">
        <text>5-diphospho-1D-myo-inositol 1,2,3,4,6-pentakisphosphate + ATP + H(+) = 1,5-bis(diphospho)-1D-myo-inositol 2,3,4,6-tetrakisphosphate + ADP</text>
        <dbReference type="Rhea" id="RHEA:10276"/>
        <dbReference type="ChEBI" id="CHEBI:15378"/>
        <dbReference type="ChEBI" id="CHEBI:30616"/>
        <dbReference type="ChEBI" id="CHEBI:58628"/>
        <dbReference type="ChEBI" id="CHEBI:77983"/>
        <dbReference type="ChEBI" id="CHEBI:456216"/>
        <dbReference type="EC" id="2.7.4.24"/>
    </reaction>
    <physiologicalReaction direction="left-to-right" evidence="2">
        <dbReference type="Rhea" id="RHEA:10277"/>
    </physiologicalReaction>
</comment>
<comment type="subcellular location">
    <subcellularLocation>
        <location evidence="2">Cytoplasm</location>
        <location evidence="2">Cytosol</location>
    </subcellularLocation>
    <subcellularLocation>
        <location evidence="2">Cell membrane</location>
    </subcellularLocation>
    <text evidence="2">Relocalizes to the plasma membrane upon activation of the PtdIns 3-kinase pathway.</text>
</comment>
<comment type="alternative products">
    <event type="alternative splicing"/>
    <isoform>
        <id>A2ARP1-1</id>
        <name>1</name>
        <sequence type="displayed"/>
    </isoform>
    <isoform>
        <id>A2ARP1-2</id>
        <name>2</name>
        <sequence type="described" ref="VSP_030631"/>
    </isoform>
    <isoform>
        <id>A2ARP1-3</id>
        <name>3</name>
        <sequence type="described" ref="VSP_030634"/>
    </isoform>
    <isoform>
        <id>A2ARP1-5</id>
        <name>4</name>
        <sequence type="described" ref="VSP_030625 VSP_030626"/>
    </isoform>
    <isoform>
        <id>A2ARP1-6</id>
        <name>5</name>
        <sequence type="described" ref="VSP_030627 VSP_030628"/>
    </isoform>
    <isoform>
        <id>A2ARP1-7</id>
        <name>6</name>
        <sequence type="described" ref="VSP_030629 VSP_030630"/>
    </isoform>
</comment>
<comment type="domain">
    <text evidence="2">The C-terminal acid phosphatase-like domain binds PtdIns(3,4,5)P3 and InsP6. Despite its similarity with the phosphatase domain of histidine acid phosphatases, it has no phosphatase activity.</text>
</comment>
<comment type="similarity">
    <text evidence="6">Belongs to the histidine acid phosphatase family. VIP1 subfamily.</text>
</comment>
<comment type="sequence caution" evidence="6">
    <conflict type="miscellaneous discrepancy">
        <sequence resource="EMBL-CDS" id="BAC32838"/>
    </conflict>
    <text>Intron retention.</text>
</comment>
<comment type="sequence caution" evidence="6">
    <conflict type="frameshift">
        <sequence resource="EMBL-CDS" id="BAC37198"/>
    </conflict>
</comment>
<comment type="sequence caution" evidence="6">
    <conflict type="erroneous initiation">
        <sequence resource="EMBL-CDS" id="BAC65546"/>
    </conflict>
    <text>Extended N-terminus.</text>
</comment>
<gene>
    <name evidence="7" type="primary">Ppip5k1</name>
    <name type="synonym">Hisppd2a</name>
    <name type="synonym">Kiaa0377</name>
    <name type="synonym">Vip1</name>
</gene>
<name>VIP1_MOUSE</name>
<reference key="1">
    <citation type="submission" date="2002-04" db="EMBL/GenBank/DDBJ databases">
        <title>A 60kb genomic deletion is associated with non-syndromic deafness and sperm motility disorder but not with congenital dyserythropoietic anemia type I.</title>
        <authorList>
            <person name="Avidan N."/>
            <person name="Dgany O.D."/>
            <person name="Cattan D.C."/>
            <person name="Pariente A."/>
            <person name="Thulliez M."/>
            <person name="Borot N."/>
            <person name="Moati L."/>
            <person name="Alain B."/>
            <person name="Krasnov T."/>
            <person name="Olender T."/>
            <person name="Shalmon L."/>
            <person name="Ben-Asher E."/>
            <person name="Khen M."/>
            <person name="Shalev H."/>
            <person name="Fellous M."/>
            <person name="Delaunay J."/>
            <person name="Yaniv I."/>
            <person name="Zaizov R."/>
            <person name="Beckmann J.S."/>
            <person name="Lancet D."/>
            <person name="Tamary H."/>
        </authorList>
    </citation>
    <scope>NUCLEOTIDE SEQUENCE [MRNA] (ISOFORM 1)</scope>
    <source>
        <strain>Swiss Webster</strain>
        <tissue>Brain</tissue>
    </source>
</reference>
<reference key="2">
    <citation type="journal article" date="2003" name="DNA Res.">
        <title>Prediction of the coding sequences of mouse homologues of KIAA gene: II. The complete nucleotide sequences of 400 mouse KIAA-homologous cDNAs identified by screening of terminal sequences of cDNA clones randomly sampled from size-fractionated libraries.</title>
        <authorList>
            <person name="Okazaki N."/>
            <person name="Kikuno R."/>
            <person name="Ohara R."/>
            <person name="Inamoto S."/>
            <person name="Aizawa H."/>
            <person name="Yuasa S."/>
            <person name="Nakajima D."/>
            <person name="Nagase T."/>
            <person name="Ohara O."/>
            <person name="Koga H."/>
        </authorList>
    </citation>
    <scope>NUCLEOTIDE SEQUENCE [LARGE SCALE MRNA] (ISOFORM 1)</scope>
    <source>
        <tissue>Brain</tissue>
    </source>
</reference>
<reference key="3">
    <citation type="journal article" date="2005" name="Science">
        <title>The transcriptional landscape of the mammalian genome.</title>
        <authorList>
            <person name="Carninci P."/>
            <person name="Kasukawa T."/>
            <person name="Katayama S."/>
            <person name="Gough J."/>
            <person name="Frith M.C."/>
            <person name="Maeda N."/>
            <person name="Oyama R."/>
            <person name="Ravasi T."/>
            <person name="Lenhard B."/>
            <person name="Wells C."/>
            <person name="Kodzius R."/>
            <person name="Shimokawa K."/>
            <person name="Bajic V.B."/>
            <person name="Brenner S.E."/>
            <person name="Batalov S."/>
            <person name="Forrest A.R."/>
            <person name="Zavolan M."/>
            <person name="Davis M.J."/>
            <person name="Wilming L.G."/>
            <person name="Aidinis V."/>
            <person name="Allen J.E."/>
            <person name="Ambesi-Impiombato A."/>
            <person name="Apweiler R."/>
            <person name="Aturaliya R.N."/>
            <person name="Bailey T.L."/>
            <person name="Bansal M."/>
            <person name="Baxter L."/>
            <person name="Beisel K.W."/>
            <person name="Bersano T."/>
            <person name="Bono H."/>
            <person name="Chalk A.M."/>
            <person name="Chiu K.P."/>
            <person name="Choudhary V."/>
            <person name="Christoffels A."/>
            <person name="Clutterbuck D.R."/>
            <person name="Crowe M.L."/>
            <person name="Dalla E."/>
            <person name="Dalrymple B.P."/>
            <person name="de Bono B."/>
            <person name="Della Gatta G."/>
            <person name="di Bernardo D."/>
            <person name="Down T."/>
            <person name="Engstrom P."/>
            <person name="Fagiolini M."/>
            <person name="Faulkner G."/>
            <person name="Fletcher C.F."/>
            <person name="Fukushima T."/>
            <person name="Furuno M."/>
            <person name="Futaki S."/>
            <person name="Gariboldi M."/>
            <person name="Georgii-Hemming P."/>
            <person name="Gingeras T.R."/>
            <person name="Gojobori T."/>
            <person name="Green R.E."/>
            <person name="Gustincich S."/>
            <person name="Harbers M."/>
            <person name="Hayashi Y."/>
            <person name="Hensch T.K."/>
            <person name="Hirokawa N."/>
            <person name="Hill D."/>
            <person name="Huminiecki L."/>
            <person name="Iacono M."/>
            <person name="Ikeo K."/>
            <person name="Iwama A."/>
            <person name="Ishikawa T."/>
            <person name="Jakt M."/>
            <person name="Kanapin A."/>
            <person name="Katoh M."/>
            <person name="Kawasawa Y."/>
            <person name="Kelso J."/>
            <person name="Kitamura H."/>
            <person name="Kitano H."/>
            <person name="Kollias G."/>
            <person name="Krishnan S.P."/>
            <person name="Kruger A."/>
            <person name="Kummerfeld S.K."/>
            <person name="Kurochkin I.V."/>
            <person name="Lareau L.F."/>
            <person name="Lazarevic D."/>
            <person name="Lipovich L."/>
            <person name="Liu J."/>
            <person name="Liuni S."/>
            <person name="McWilliam S."/>
            <person name="Madan Babu M."/>
            <person name="Madera M."/>
            <person name="Marchionni L."/>
            <person name="Matsuda H."/>
            <person name="Matsuzawa S."/>
            <person name="Miki H."/>
            <person name="Mignone F."/>
            <person name="Miyake S."/>
            <person name="Morris K."/>
            <person name="Mottagui-Tabar S."/>
            <person name="Mulder N."/>
            <person name="Nakano N."/>
            <person name="Nakauchi H."/>
            <person name="Ng P."/>
            <person name="Nilsson R."/>
            <person name="Nishiguchi S."/>
            <person name="Nishikawa S."/>
            <person name="Nori F."/>
            <person name="Ohara O."/>
            <person name="Okazaki Y."/>
            <person name="Orlando V."/>
            <person name="Pang K.C."/>
            <person name="Pavan W.J."/>
            <person name="Pavesi G."/>
            <person name="Pesole G."/>
            <person name="Petrovsky N."/>
            <person name="Piazza S."/>
            <person name="Reed J."/>
            <person name="Reid J.F."/>
            <person name="Ring B.Z."/>
            <person name="Ringwald M."/>
            <person name="Rost B."/>
            <person name="Ruan Y."/>
            <person name="Salzberg S.L."/>
            <person name="Sandelin A."/>
            <person name="Schneider C."/>
            <person name="Schoenbach C."/>
            <person name="Sekiguchi K."/>
            <person name="Semple C.A."/>
            <person name="Seno S."/>
            <person name="Sessa L."/>
            <person name="Sheng Y."/>
            <person name="Shibata Y."/>
            <person name="Shimada H."/>
            <person name="Shimada K."/>
            <person name="Silva D."/>
            <person name="Sinclair B."/>
            <person name="Sperling S."/>
            <person name="Stupka E."/>
            <person name="Sugiura K."/>
            <person name="Sultana R."/>
            <person name="Takenaka Y."/>
            <person name="Taki K."/>
            <person name="Tammoja K."/>
            <person name="Tan S.L."/>
            <person name="Tang S."/>
            <person name="Taylor M.S."/>
            <person name="Tegner J."/>
            <person name="Teichmann S.A."/>
            <person name="Ueda H.R."/>
            <person name="van Nimwegen E."/>
            <person name="Verardo R."/>
            <person name="Wei C.L."/>
            <person name="Yagi K."/>
            <person name="Yamanishi H."/>
            <person name="Zabarovsky E."/>
            <person name="Zhu S."/>
            <person name="Zimmer A."/>
            <person name="Hide W."/>
            <person name="Bult C."/>
            <person name="Grimmond S.M."/>
            <person name="Teasdale R.D."/>
            <person name="Liu E.T."/>
            <person name="Brusic V."/>
            <person name="Quackenbush J."/>
            <person name="Wahlestedt C."/>
            <person name="Mattick J.S."/>
            <person name="Hume D.A."/>
            <person name="Kai C."/>
            <person name="Sasaki D."/>
            <person name="Tomaru Y."/>
            <person name="Fukuda S."/>
            <person name="Kanamori-Katayama M."/>
            <person name="Suzuki M."/>
            <person name="Aoki J."/>
            <person name="Arakawa T."/>
            <person name="Iida J."/>
            <person name="Imamura K."/>
            <person name="Itoh M."/>
            <person name="Kato T."/>
            <person name="Kawaji H."/>
            <person name="Kawagashira N."/>
            <person name="Kawashima T."/>
            <person name="Kojima M."/>
            <person name="Kondo S."/>
            <person name="Konno H."/>
            <person name="Nakano K."/>
            <person name="Ninomiya N."/>
            <person name="Nishio T."/>
            <person name="Okada M."/>
            <person name="Plessy C."/>
            <person name="Shibata K."/>
            <person name="Shiraki T."/>
            <person name="Suzuki S."/>
            <person name="Tagami M."/>
            <person name="Waki K."/>
            <person name="Watahiki A."/>
            <person name="Okamura-Oho Y."/>
            <person name="Suzuki H."/>
            <person name="Kawai J."/>
            <person name="Hayashizaki Y."/>
        </authorList>
    </citation>
    <scope>NUCLEOTIDE SEQUENCE [LARGE SCALE MRNA] (ISOFORMS 4 AND 6)</scope>
    <source>
        <strain>C57BL/6J</strain>
        <tissue>Adipose tissue</tissue>
        <tissue>Hippocampus</tissue>
        <tissue>Olfactory bulb</tissue>
    </source>
</reference>
<reference key="4">
    <citation type="journal article" date="2009" name="PLoS Biol.">
        <title>Lineage-specific biology revealed by a finished genome assembly of the mouse.</title>
        <authorList>
            <person name="Church D.M."/>
            <person name="Goodstadt L."/>
            <person name="Hillier L.W."/>
            <person name="Zody M.C."/>
            <person name="Goldstein S."/>
            <person name="She X."/>
            <person name="Bult C.J."/>
            <person name="Agarwala R."/>
            <person name="Cherry J.L."/>
            <person name="DiCuccio M."/>
            <person name="Hlavina W."/>
            <person name="Kapustin Y."/>
            <person name="Meric P."/>
            <person name="Maglott D."/>
            <person name="Birtle Z."/>
            <person name="Marques A.C."/>
            <person name="Graves T."/>
            <person name="Zhou S."/>
            <person name="Teague B."/>
            <person name="Potamousis K."/>
            <person name="Churas C."/>
            <person name="Place M."/>
            <person name="Herschleb J."/>
            <person name="Runnheim R."/>
            <person name="Forrest D."/>
            <person name="Amos-Landgraf J."/>
            <person name="Schwartz D.C."/>
            <person name="Cheng Z."/>
            <person name="Lindblad-Toh K."/>
            <person name="Eichler E.E."/>
            <person name="Ponting C.P."/>
        </authorList>
    </citation>
    <scope>NUCLEOTIDE SEQUENCE [LARGE SCALE GENOMIC DNA]</scope>
    <scope>ALTERNATIVE SPLICING</scope>
    <source>
        <strain>C57BL/6J</strain>
    </source>
</reference>
<reference key="5">
    <citation type="journal article" date="2004" name="Genome Res.">
        <title>The status, quality, and expansion of the NIH full-length cDNA project: the Mammalian Gene Collection (MGC).</title>
        <authorList>
            <consortium name="The MGC Project Team"/>
        </authorList>
    </citation>
    <scope>NUCLEOTIDE SEQUENCE [LARGE SCALE MRNA] (ISOFORM 5)</scope>
    <source>
        <strain>C57BL/6J</strain>
        <tissue>Eye</tissue>
    </source>
</reference>
<reference key="6">
    <citation type="journal article" date="2010" name="Cell">
        <title>A tissue-specific atlas of mouse protein phosphorylation and expression.</title>
        <authorList>
            <person name="Huttlin E.L."/>
            <person name="Jedrychowski M.P."/>
            <person name="Elias J.E."/>
            <person name="Goswami T."/>
            <person name="Rad R."/>
            <person name="Beausoleil S.A."/>
            <person name="Villen J."/>
            <person name="Haas W."/>
            <person name="Sowa M.E."/>
            <person name="Gygi S.P."/>
        </authorList>
    </citation>
    <scope>PHOSPHORYLATION [LARGE SCALE ANALYSIS] AT SER-1140 AND SER-1147</scope>
    <scope>IDENTIFICATION BY MASS SPECTROMETRY [LARGE SCALE ANALYSIS]</scope>
    <source>
        <tissue>Brain</tissue>
        <tissue>Brown adipose tissue</tissue>
        <tissue>Kidney</tissue>
        <tissue>Lung</tissue>
    </source>
</reference>
<organism>
    <name type="scientific">Mus musculus</name>
    <name type="common">Mouse</name>
    <dbReference type="NCBI Taxonomy" id="10090"/>
    <lineage>
        <taxon>Eukaryota</taxon>
        <taxon>Metazoa</taxon>
        <taxon>Chordata</taxon>
        <taxon>Craniata</taxon>
        <taxon>Vertebrata</taxon>
        <taxon>Euteleostomi</taxon>
        <taxon>Mammalia</taxon>
        <taxon>Eutheria</taxon>
        <taxon>Euarchontoglires</taxon>
        <taxon>Glires</taxon>
        <taxon>Rodentia</taxon>
        <taxon>Myomorpha</taxon>
        <taxon>Muroidea</taxon>
        <taxon>Muridae</taxon>
        <taxon>Murinae</taxon>
        <taxon>Mus</taxon>
        <taxon>Mus</taxon>
    </lineage>
</organism>
<keyword id="KW-0025">Alternative splicing</keyword>
<keyword id="KW-0067">ATP-binding</keyword>
<keyword id="KW-1003">Cell membrane</keyword>
<keyword id="KW-0963">Cytoplasm</keyword>
<keyword id="KW-0418">Kinase</keyword>
<keyword id="KW-0472">Membrane</keyword>
<keyword id="KW-0547">Nucleotide-binding</keyword>
<keyword id="KW-0597">Phosphoprotein</keyword>
<keyword id="KW-1185">Reference proteome</keyword>
<keyword id="KW-0808">Transferase</keyword>
<dbReference type="EC" id="2.7.4.24" evidence="2"/>
<dbReference type="EMBL" id="AF502585">
    <property type="protein sequence ID" value="AAP46293.1"/>
    <property type="molecule type" value="mRNA"/>
</dbReference>
<dbReference type="EMBL" id="AK122264">
    <property type="protein sequence ID" value="BAC65546.1"/>
    <property type="status" value="ALT_INIT"/>
    <property type="molecule type" value="mRNA"/>
</dbReference>
<dbReference type="EMBL" id="AK046696">
    <property type="protein sequence ID" value="BAC32838.1"/>
    <property type="status" value="ALT_SEQ"/>
    <property type="molecule type" value="mRNA"/>
</dbReference>
<dbReference type="EMBL" id="AK078268">
    <property type="protein sequence ID" value="BAC37198.1"/>
    <property type="status" value="ALT_FRAME"/>
    <property type="molecule type" value="mRNA"/>
</dbReference>
<dbReference type="EMBL" id="AK083140">
    <property type="protein sequence ID" value="BAC38780.1"/>
    <property type="molecule type" value="mRNA"/>
</dbReference>
<dbReference type="EMBL" id="AL845466">
    <property type="status" value="NOT_ANNOTATED_CDS"/>
    <property type="molecule type" value="Genomic_DNA"/>
</dbReference>
<dbReference type="EMBL" id="BC065138">
    <property type="protein sequence ID" value="AAH65138.1"/>
    <property type="molecule type" value="mRNA"/>
</dbReference>
<dbReference type="CCDS" id="CCDS16639.1">
    <molecule id="A2ARP1-1"/>
</dbReference>
<dbReference type="RefSeq" id="NP_001394798.1">
    <molecule id="A2ARP1-1"/>
    <property type="nucleotide sequence ID" value="NM_001407869.1"/>
</dbReference>
<dbReference type="RefSeq" id="NP_001394802.1">
    <molecule id="A2ARP1-3"/>
    <property type="nucleotide sequence ID" value="NM_001407873.1"/>
</dbReference>
<dbReference type="RefSeq" id="NP_001394817.1">
    <molecule id="A2ARP1-7"/>
    <property type="nucleotide sequence ID" value="NM_001407888.1"/>
</dbReference>
<dbReference type="RefSeq" id="NP_001394819.1">
    <molecule id="A2ARP1-7"/>
    <property type="nucleotide sequence ID" value="NM_001407890.1"/>
</dbReference>
<dbReference type="RefSeq" id="NP_001394822.1">
    <molecule id="A2ARP1-5"/>
    <property type="nucleotide sequence ID" value="NM_001407893.1"/>
</dbReference>
<dbReference type="RefSeq" id="NP_848910.3">
    <molecule id="A2ARP1-1"/>
    <property type="nucleotide sequence ID" value="NM_178795.4"/>
</dbReference>
<dbReference type="RefSeq" id="XP_006499804.1">
    <property type="nucleotide sequence ID" value="XM_006499741.3"/>
</dbReference>
<dbReference type="RefSeq" id="XP_011237919.1">
    <property type="nucleotide sequence ID" value="XM_011239617.2"/>
</dbReference>
<dbReference type="SMR" id="A2ARP1"/>
<dbReference type="BioGRID" id="236476">
    <property type="interactions" value="3"/>
</dbReference>
<dbReference type="FunCoup" id="A2ARP1">
    <property type="interactions" value="587"/>
</dbReference>
<dbReference type="STRING" id="10090.ENSMUSP00000057632"/>
<dbReference type="iPTMnet" id="A2ARP1"/>
<dbReference type="PhosphoSitePlus" id="A2ARP1"/>
<dbReference type="SwissPalm" id="A2ARP1"/>
<dbReference type="PaxDb" id="10090-ENSMUSP00000106256"/>
<dbReference type="PeptideAtlas" id="A2ARP1"/>
<dbReference type="ProteomicsDB" id="297913">
    <molecule id="A2ARP1-1"/>
</dbReference>
<dbReference type="ProteomicsDB" id="297914">
    <molecule id="A2ARP1-2"/>
</dbReference>
<dbReference type="ProteomicsDB" id="297915">
    <molecule id="A2ARP1-3"/>
</dbReference>
<dbReference type="ProteomicsDB" id="297916">
    <molecule id="A2ARP1-5"/>
</dbReference>
<dbReference type="ProteomicsDB" id="297917">
    <molecule id="A2ARP1-6"/>
</dbReference>
<dbReference type="ProteomicsDB" id="297918">
    <molecule id="A2ARP1-7"/>
</dbReference>
<dbReference type="Pumba" id="A2ARP1"/>
<dbReference type="Antibodypedia" id="35179">
    <property type="antibodies" value="48 antibodies from 14 providers"/>
</dbReference>
<dbReference type="DNASU" id="327655"/>
<dbReference type="Ensembl" id="ENSMUST00000052029.10">
    <molecule id="A2ARP1-1"/>
    <property type="protein sequence ID" value="ENSMUSP00000057632.4"/>
    <property type="gene ID" value="ENSMUSG00000033526.17"/>
</dbReference>
<dbReference type="Ensembl" id="ENSMUST00000110625.8">
    <molecule id="A2ARP1-3"/>
    <property type="protein sequence ID" value="ENSMUSP00000106255.2"/>
    <property type="gene ID" value="ENSMUSG00000033526.17"/>
</dbReference>
<dbReference type="Ensembl" id="ENSMUST00000110626.8">
    <molecule id="A2ARP1-1"/>
    <property type="protein sequence ID" value="ENSMUSP00000106256.2"/>
    <property type="gene ID" value="ENSMUSG00000033526.17"/>
</dbReference>
<dbReference type="Ensembl" id="ENSMUST00000110627.8">
    <molecule id="A2ARP1-3"/>
    <property type="protein sequence ID" value="ENSMUSP00000106257.2"/>
    <property type="gene ID" value="ENSMUSG00000033526.17"/>
</dbReference>
<dbReference type="Ensembl" id="ENSMUST00000110628.8">
    <molecule id="A2ARP1-2"/>
    <property type="protein sequence ID" value="ENSMUSP00000106258.2"/>
    <property type="gene ID" value="ENSMUSG00000033526.17"/>
</dbReference>
<dbReference type="GeneID" id="327655"/>
<dbReference type="KEGG" id="mmu:327655"/>
<dbReference type="UCSC" id="uc008lyl.1">
    <molecule id="A2ARP1-1"/>
    <property type="organism name" value="mouse"/>
</dbReference>
<dbReference type="UCSC" id="uc008lyq.1">
    <molecule id="A2ARP1-7"/>
    <property type="organism name" value="mouse"/>
</dbReference>
<dbReference type="UCSC" id="uc008lyr.1">
    <molecule id="A2ARP1-5"/>
    <property type="organism name" value="mouse"/>
</dbReference>
<dbReference type="UCSC" id="uc008lys.1">
    <molecule id="A2ARP1-6"/>
    <property type="organism name" value="mouse"/>
</dbReference>
<dbReference type="AGR" id="MGI:2443281"/>
<dbReference type="CTD" id="9677"/>
<dbReference type="MGI" id="MGI:2443281">
    <property type="gene designation" value="Ppip5k1"/>
</dbReference>
<dbReference type="VEuPathDB" id="HostDB:ENSMUSG00000033526"/>
<dbReference type="eggNOG" id="KOG1057">
    <property type="taxonomic scope" value="Eukaryota"/>
</dbReference>
<dbReference type="GeneTree" id="ENSGT00390000009048"/>
<dbReference type="HOGENOM" id="CLU_000914_0_0_1"/>
<dbReference type="InParanoid" id="A2ARP1"/>
<dbReference type="OMA" id="AWPRCDA"/>
<dbReference type="OrthoDB" id="18042at2759"/>
<dbReference type="PhylomeDB" id="A2ARP1"/>
<dbReference type="TreeFam" id="TF313594"/>
<dbReference type="Reactome" id="R-MMU-1855167">
    <property type="pathway name" value="Synthesis of pyrophosphates in the cytosol"/>
</dbReference>
<dbReference type="BioGRID-ORCS" id="327655">
    <property type="hits" value="2 hits in 76 CRISPR screens"/>
</dbReference>
<dbReference type="PRO" id="PR:A2ARP1"/>
<dbReference type="Proteomes" id="UP000000589">
    <property type="component" value="Chromosome 2"/>
</dbReference>
<dbReference type="RNAct" id="A2ARP1">
    <property type="molecule type" value="protein"/>
</dbReference>
<dbReference type="Bgee" id="ENSMUSG00000033526">
    <property type="expression patterns" value="Expressed in retinal neural layer and 221 other cell types or tissues"/>
</dbReference>
<dbReference type="ExpressionAtlas" id="A2ARP1">
    <property type="expression patterns" value="baseline and differential"/>
</dbReference>
<dbReference type="GO" id="GO:0005829">
    <property type="term" value="C:cytosol"/>
    <property type="evidence" value="ECO:0000250"/>
    <property type="project" value="UniProtKB"/>
</dbReference>
<dbReference type="GO" id="GO:0005886">
    <property type="term" value="C:plasma membrane"/>
    <property type="evidence" value="ECO:0007669"/>
    <property type="project" value="UniProtKB-SubCell"/>
</dbReference>
<dbReference type="GO" id="GO:0033857">
    <property type="term" value="F:5-diphosphoinositol pentakisphosphate 1-kinase activity"/>
    <property type="evidence" value="ECO:0000250"/>
    <property type="project" value="UniProtKB"/>
</dbReference>
<dbReference type="GO" id="GO:0005524">
    <property type="term" value="F:ATP binding"/>
    <property type="evidence" value="ECO:0000250"/>
    <property type="project" value="UniProtKB"/>
</dbReference>
<dbReference type="GO" id="GO:0052723">
    <property type="term" value="F:inositol hexakisphosphate 1-kinase activity"/>
    <property type="evidence" value="ECO:0007669"/>
    <property type="project" value="RHEA"/>
</dbReference>
<dbReference type="GO" id="GO:0000832">
    <property type="term" value="F:inositol hexakisphosphate 5-kinase activity"/>
    <property type="evidence" value="ECO:0000250"/>
    <property type="project" value="UniProtKB"/>
</dbReference>
<dbReference type="GO" id="GO:0000828">
    <property type="term" value="F:inositol hexakisphosphate kinase activity"/>
    <property type="evidence" value="ECO:0000250"/>
    <property type="project" value="UniProtKB"/>
</dbReference>
<dbReference type="GO" id="GO:0000827">
    <property type="term" value="F:inositol-1,3,4,5,6-pentakisphosphate kinase activity"/>
    <property type="evidence" value="ECO:0000250"/>
    <property type="project" value="UniProtKB"/>
</dbReference>
<dbReference type="GO" id="GO:0006020">
    <property type="term" value="P:inositol metabolic process"/>
    <property type="evidence" value="ECO:0000250"/>
    <property type="project" value="UniProtKB"/>
</dbReference>
<dbReference type="CDD" id="cd07061">
    <property type="entry name" value="HP_HAP_like"/>
    <property type="match status" value="1"/>
</dbReference>
<dbReference type="FunFam" id="3.30.470.20:FF:000003">
    <property type="entry name" value="Inositol hexakisphosphate and diphosphoinositol-pentakisphosphate kinase"/>
    <property type="match status" value="1"/>
</dbReference>
<dbReference type="FunFam" id="3.40.50.11950:FF:000001">
    <property type="entry name" value="Inositol hexakisphosphate and diphosphoinositol-pentakisphosphate kinase"/>
    <property type="match status" value="1"/>
</dbReference>
<dbReference type="FunFam" id="3.40.50.11950:FF:000003">
    <property type="entry name" value="Inositol hexakisphosphate and diphosphoinositol-pentakisphosphate kinase"/>
    <property type="match status" value="1"/>
</dbReference>
<dbReference type="Gene3D" id="3.40.50.11950">
    <property type="match status" value="1"/>
</dbReference>
<dbReference type="Gene3D" id="3.30.470.20">
    <property type="entry name" value="ATP-grasp fold, B domain"/>
    <property type="match status" value="1"/>
</dbReference>
<dbReference type="Gene3D" id="3.40.50.1240">
    <property type="entry name" value="Phosphoglycerate mutase-like"/>
    <property type="match status" value="1"/>
</dbReference>
<dbReference type="InterPro" id="IPR033379">
    <property type="entry name" value="Acid_Pase_AS"/>
</dbReference>
<dbReference type="InterPro" id="IPR000560">
    <property type="entry name" value="His_Pase_clade-2"/>
</dbReference>
<dbReference type="InterPro" id="IPR037446">
    <property type="entry name" value="His_Pase_VIP1"/>
</dbReference>
<dbReference type="InterPro" id="IPR029033">
    <property type="entry name" value="His_PPase_superfam"/>
</dbReference>
<dbReference type="InterPro" id="IPR040557">
    <property type="entry name" value="VIP1_N"/>
</dbReference>
<dbReference type="PANTHER" id="PTHR12750">
    <property type="entry name" value="DIPHOSPHOINOSITOL PENTAKISPHOSPHATE KINASE"/>
    <property type="match status" value="1"/>
</dbReference>
<dbReference type="PANTHER" id="PTHR12750:SF11">
    <property type="entry name" value="INOSITOL HEXAKISPHOSPHATE AND DIPHOSPHOINOSITOL-PENTAKISPHOSPHATE KINASE 1"/>
    <property type="match status" value="1"/>
</dbReference>
<dbReference type="Pfam" id="PF00328">
    <property type="entry name" value="His_Phos_2"/>
    <property type="match status" value="1"/>
</dbReference>
<dbReference type="Pfam" id="PF18086">
    <property type="entry name" value="PPIP5K2_N"/>
    <property type="match status" value="1"/>
</dbReference>
<dbReference type="SUPFAM" id="SSF53254">
    <property type="entry name" value="Phosphoglycerate mutase-like"/>
    <property type="match status" value="1"/>
</dbReference>
<dbReference type="PROSITE" id="PS00616">
    <property type="entry name" value="HIS_ACID_PHOSPHAT_1"/>
    <property type="match status" value="1"/>
</dbReference>
<protein>
    <recommendedName>
        <fullName evidence="6">Inositol hexakisphosphate and diphosphoinositol-pentakisphosphate kinase 1</fullName>
        <ecNumber evidence="2">2.7.4.24</ecNumber>
    </recommendedName>
    <alternativeName>
        <fullName>Diphosphoinositol pentakisphosphate kinase 1</fullName>
    </alternativeName>
    <alternativeName>
        <fullName>Histidine acid phosphatase domain-containing protein 2A</fullName>
    </alternativeName>
    <alternativeName>
        <fullName>InsP6 and PP-IP5 kinase 1</fullName>
    </alternativeName>
    <alternativeName>
        <fullName>VIP1 homolog</fullName>
    </alternativeName>
</protein>
<accession>A2ARP1</accession>
<accession>A2ARP2</accession>
<accession>A2ARP3</accession>
<accession>A2ARP4</accession>
<accession>Q6P1C8</accession>
<accession>Q7TSP1</accession>
<accession>Q80U21</accession>
<accession>Q8BL16</accession>
<accession>Q8BUN6</accession>
<accession>Q8BVG9</accession>
<proteinExistence type="evidence at protein level"/>
<sequence>MWSLTANEDESTTAHFFLGAGDEGLGTCGIGMRTEESDSELLEDEEDEVPPEPQIIVGICAMTKKSKSKPMTQILERLCRFDYLTVVILGEDVILNEPVENWPSCHCLISFHSKGFPLDKAVAYSKLRNPFLINDLAMQYYIQDRREVYRILQEEGIDLPRYAVLNRDPACPEECSLIEGEDQVEVNGAVFPKPFVEKPVSAEDHNVYIYYPSSAGGGSQRLFRKIGSRSSVYSPESSVRKTGSYIYEEFMPTDGTDVKVYTVGPDYAHAEARKSPALDGKVERDSEGKEVRYPVMLTAMEKLVARKVCVAFKQTVCGFDLLRANGHSFVCDVNGFSFVKNSMKYYDDCAKILGNTIMRELAPQFQIPWSIPTEAEDIPIVPTTSGTMMELRCVIAIIRHGDRTPKQKMKMEVTHPRFFALFEKHGGYKTGKLKLKRPEQLQEVLDITRLLLAELEKEPEAEIEEKTGKLEQLKSVLEMYGHFSGINRKVQLTYYPHGVKASNEGQDLQREPLAPSLLLVLKWGGELTPDGRVQAEELGRAFRCMYPGGQGDYAGFPGCGLLRLHSTFRHDLKIYASDEGRVQMTAAAFAKGLLALEGELTPILVQMVKSANMNGLLDSDSDSLSSCQHRVKARLHHILQQDAPFGPEDYDQLAPTGSTSLLNSMSVIQNPVKVCDQVFALIENLTHQIRERMQDPSSVDLQLYHSETLELMLQRWSKLERDFRQKSGRYDISKIPDIYDCVKYDVQHNGSLGLQGTAELLRLSKALADVVIPQEYGISREEKVEIAVGFCLPLLRKILLDLQRTHEDESVNKLHPLYSRGVLSPGRHVRTRLYFTSESHVHSLLSVFRYGGLLDETQDAQWQRALAYLSAISELNYMTQIVIMLYEDNTRDPLSEERFHVELHFSPGVKGVEEGSAPAGCGFRPASSENEEMKTDPGSIENLCPGKASDEPDRALQTSPQPVEGTGLPRRSPLIRNRKAGSMEVLSETSSSRPGGYRLFSSSRPPTEMKQSGLGSQCTGLFSTTVLGGSSSAPNLQDYARTHGKKLPPASLKHRDELLFVPAVKRFSVSFAKHPTNGFEGCSMVPTIYPLETLHNALSLRQVSEFLTKVCQRHTDAHAQASAALFDSMHNHQASDSPFSPPRTLHSPPLQLRHRSEKPPWYSSGPSSTVSSAGPSSPTTVDGNSHFGFSDQSSVNIHMTEEKQGFGLLQETPGDGTRELHIERQQELVEPAQSPQELPVEICPSGSQGVTKVSQTCQEVPDIVQPCHNIHEEIGQPQQEVPDISQLLLKDHDTTTNTCHLCQASQLSQKVCEEICQLCQDNHEESNQLCQEVSVKLGRMVHGFPVNVDSTAQETLMEIGRPTQEIPEDPYQEFSVKVGVLAQKAPAISELSQDIPEADKPSQELSEETELQAQEVSEEIDQESEVVDELPPEAIS</sequence>